<protein>
    <recommendedName>
        <fullName evidence="1">Arginine deiminase</fullName>
        <shortName evidence="1">ADI</shortName>
        <ecNumber evidence="1">3.5.3.6</ecNumber>
    </recommendedName>
    <alternativeName>
        <fullName evidence="1">Arginine dihydrolase</fullName>
        <shortName evidence="1">AD</shortName>
    </alternativeName>
</protein>
<organism>
    <name type="scientific">Escherichia coli O1:K1 / APEC</name>
    <dbReference type="NCBI Taxonomy" id="405955"/>
    <lineage>
        <taxon>Bacteria</taxon>
        <taxon>Pseudomonadati</taxon>
        <taxon>Pseudomonadota</taxon>
        <taxon>Gammaproteobacteria</taxon>
        <taxon>Enterobacterales</taxon>
        <taxon>Enterobacteriaceae</taxon>
        <taxon>Escherichia</taxon>
    </lineage>
</organism>
<proteinExistence type="inferred from homology"/>
<feature type="chain" id="PRO_1000100737" description="Arginine deiminase">
    <location>
        <begin position="1"/>
        <end position="407"/>
    </location>
</feature>
<feature type="active site" description="Amidino-cysteine intermediate" evidence="1">
    <location>
        <position position="397"/>
    </location>
</feature>
<comment type="catalytic activity">
    <reaction evidence="1">
        <text>L-arginine + H2O = L-citrulline + NH4(+)</text>
        <dbReference type="Rhea" id="RHEA:19597"/>
        <dbReference type="ChEBI" id="CHEBI:15377"/>
        <dbReference type="ChEBI" id="CHEBI:28938"/>
        <dbReference type="ChEBI" id="CHEBI:32682"/>
        <dbReference type="ChEBI" id="CHEBI:57743"/>
        <dbReference type="EC" id="3.5.3.6"/>
    </reaction>
</comment>
<comment type="pathway">
    <text evidence="1">Amino-acid degradation; L-arginine degradation via ADI pathway; carbamoyl phosphate from L-arginine: step 1/2.</text>
</comment>
<comment type="subcellular location">
    <subcellularLocation>
        <location evidence="1">Cytoplasm</location>
    </subcellularLocation>
</comment>
<comment type="similarity">
    <text evidence="1">Belongs to the arginine deiminase family.</text>
</comment>
<accession>A1AJF5</accession>
<name>ARCA_ECOK1</name>
<keyword id="KW-0056">Arginine metabolism</keyword>
<keyword id="KW-0963">Cytoplasm</keyword>
<keyword id="KW-0378">Hydrolase</keyword>
<keyword id="KW-1185">Reference proteome</keyword>
<evidence type="ECO:0000255" key="1">
    <source>
        <dbReference type="HAMAP-Rule" id="MF_00242"/>
    </source>
</evidence>
<dbReference type="EC" id="3.5.3.6" evidence="1"/>
<dbReference type="EMBL" id="CP000468">
    <property type="protein sequence ID" value="ABJ03795.1"/>
    <property type="molecule type" value="Genomic_DNA"/>
</dbReference>
<dbReference type="SMR" id="A1AJF5"/>
<dbReference type="KEGG" id="ecv:APECO1_2142"/>
<dbReference type="HOGENOM" id="CLU_052662_0_0_6"/>
<dbReference type="UniPathway" id="UPA00254">
    <property type="reaction ID" value="UER00364"/>
</dbReference>
<dbReference type="Proteomes" id="UP000008216">
    <property type="component" value="Chromosome"/>
</dbReference>
<dbReference type="GO" id="GO:0005737">
    <property type="term" value="C:cytoplasm"/>
    <property type="evidence" value="ECO:0007669"/>
    <property type="project" value="UniProtKB-SubCell"/>
</dbReference>
<dbReference type="GO" id="GO:0016990">
    <property type="term" value="F:arginine deiminase activity"/>
    <property type="evidence" value="ECO:0007669"/>
    <property type="project" value="UniProtKB-UniRule"/>
</dbReference>
<dbReference type="GO" id="GO:0019547">
    <property type="term" value="P:arginine catabolic process to ornithine"/>
    <property type="evidence" value="ECO:0007669"/>
    <property type="project" value="UniProtKB-UniRule"/>
</dbReference>
<dbReference type="GO" id="GO:0019546">
    <property type="term" value="P:arginine deiminase pathway"/>
    <property type="evidence" value="ECO:0007669"/>
    <property type="project" value="TreeGrafter"/>
</dbReference>
<dbReference type="FunFam" id="1.10.3930.10:FF:000002">
    <property type="entry name" value="Arginine deiminase"/>
    <property type="match status" value="1"/>
</dbReference>
<dbReference type="Gene3D" id="1.10.3930.10">
    <property type="entry name" value="Arginine deiminase"/>
    <property type="match status" value="1"/>
</dbReference>
<dbReference type="Gene3D" id="3.75.10.10">
    <property type="entry name" value="L-arginine/glycine Amidinotransferase, Chain A"/>
    <property type="match status" value="1"/>
</dbReference>
<dbReference type="HAMAP" id="MF_00242">
    <property type="entry name" value="Arg_deiminase"/>
    <property type="match status" value="1"/>
</dbReference>
<dbReference type="InterPro" id="IPR003876">
    <property type="entry name" value="Arg_deiminase"/>
</dbReference>
<dbReference type="NCBIfam" id="TIGR01078">
    <property type="entry name" value="arcA"/>
    <property type="match status" value="1"/>
</dbReference>
<dbReference type="NCBIfam" id="NF002381">
    <property type="entry name" value="PRK01388.1"/>
    <property type="match status" value="1"/>
</dbReference>
<dbReference type="PANTHER" id="PTHR47271">
    <property type="entry name" value="ARGININE DEIMINASE"/>
    <property type="match status" value="1"/>
</dbReference>
<dbReference type="PANTHER" id="PTHR47271:SF2">
    <property type="entry name" value="ARGININE DEIMINASE"/>
    <property type="match status" value="1"/>
</dbReference>
<dbReference type="Pfam" id="PF02274">
    <property type="entry name" value="ADI"/>
    <property type="match status" value="1"/>
</dbReference>
<dbReference type="PIRSF" id="PIRSF006356">
    <property type="entry name" value="Arg_deiminase"/>
    <property type="match status" value="1"/>
</dbReference>
<dbReference type="PRINTS" id="PR01466">
    <property type="entry name" value="ARGDEIMINASE"/>
</dbReference>
<dbReference type="SUPFAM" id="SSF55909">
    <property type="entry name" value="Pentein"/>
    <property type="match status" value="1"/>
</dbReference>
<reference key="1">
    <citation type="journal article" date="2007" name="J. Bacteriol.">
        <title>The genome sequence of avian pathogenic Escherichia coli strain O1:K1:H7 shares strong similarities with human extraintestinal pathogenic E. coli genomes.</title>
        <authorList>
            <person name="Johnson T.J."/>
            <person name="Kariyawasam S."/>
            <person name="Wannemuehler Y."/>
            <person name="Mangiamele P."/>
            <person name="Johnson S.J."/>
            <person name="Doetkott C."/>
            <person name="Skyberg J.A."/>
            <person name="Lynne A.M."/>
            <person name="Johnson J.R."/>
            <person name="Nolan L.K."/>
        </authorList>
    </citation>
    <scope>NUCLEOTIDE SEQUENCE [LARGE SCALE GENOMIC DNA]</scope>
</reference>
<gene>
    <name evidence="1" type="primary">arcA</name>
    <name type="ordered locus">Ecok1_43010</name>
    <name type="ORF">APECO1_2142</name>
</gene>
<sequence>MMEKHYVGSEIGQLRSVMLHRPNLSLKRLTPSNCQELLFDDVLSVERAGEEHDIFANTLRQQGIEVLLLTDLLTQTLDIPEAKSWLLETQISDYRLGPTFATDVRTWLAEMSHRDLARHLSGGLTYSEIPASIKNMVVDTHDINDFIMKPLPNHLFTRDTSCWIYNGVSINPMAKPARQRETNNLRAIYRWHPQFAGGEFIKYFGDENINYDHATLEGGDVLVIGRGAVLIGMSERTTPQGIEFLAQALFKHRQAERVIAVELPKHRSCMHLDTVMTHIDIDTFSVYPEVVRPDVNCWTLTPDGHGGLKRTQESTLLHAIEKALGIDQVRLITTGGDAFEAEREQWNDANNVLTLRPGVVVGYERNIWTNEKYDKAGITVLPIPGDELGRGRGGARCMSCPLHRDGI</sequence>